<organism>
    <name type="scientific">Bordetella pertussis (strain Tohama I / ATCC BAA-589 / NCTC 13251)</name>
    <dbReference type="NCBI Taxonomy" id="257313"/>
    <lineage>
        <taxon>Bacteria</taxon>
        <taxon>Pseudomonadati</taxon>
        <taxon>Pseudomonadota</taxon>
        <taxon>Betaproteobacteria</taxon>
        <taxon>Burkholderiales</taxon>
        <taxon>Alcaligenaceae</taxon>
        <taxon>Bordetella</taxon>
    </lineage>
</organism>
<protein>
    <recommendedName>
        <fullName evidence="1">SsrA-binding protein</fullName>
    </recommendedName>
    <alternativeName>
        <fullName evidence="1">Small protein B</fullName>
    </alternativeName>
</protein>
<dbReference type="EMBL" id="BX640415">
    <property type="protein sequence ID" value="CAE41732.1"/>
    <property type="molecule type" value="Genomic_DNA"/>
</dbReference>
<dbReference type="RefSeq" id="NP_880184.1">
    <property type="nucleotide sequence ID" value="NC_002929.2"/>
</dbReference>
<dbReference type="RefSeq" id="WP_003811754.1">
    <property type="nucleotide sequence ID" value="NZ_CP039022.1"/>
</dbReference>
<dbReference type="SMR" id="Q7VYA8"/>
<dbReference type="STRING" id="257313.BP1442"/>
<dbReference type="PaxDb" id="257313-BP1442"/>
<dbReference type="GeneID" id="69601353"/>
<dbReference type="KEGG" id="bpe:BP1442"/>
<dbReference type="PATRIC" id="fig|257313.5.peg.1546"/>
<dbReference type="eggNOG" id="COG0691">
    <property type="taxonomic scope" value="Bacteria"/>
</dbReference>
<dbReference type="HOGENOM" id="CLU_108953_3_0_4"/>
<dbReference type="Proteomes" id="UP000002676">
    <property type="component" value="Chromosome"/>
</dbReference>
<dbReference type="GO" id="GO:0005829">
    <property type="term" value="C:cytosol"/>
    <property type="evidence" value="ECO:0007669"/>
    <property type="project" value="TreeGrafter"/>
</dbReference>
<dbReference type="GO" id="GO:0003723">
    <property type="term" value="F:RNA binding"/>
    <property type="evidence" value="ECO:0007669"/>
    <property type="project" value="UniProtKB-UniRule"/>
</dbReference>
<dbReference type="GO" id="GO:0070929">
    <property type="term" value="P:trans-translation"/>
    <property type="evidence" value="ECO:0007669"/>
    <property type="project" value="UniProtKB-UniRule"/>
</dbReference>
<dbReference type="CDD" id="cd09294">
    <property type="entry name" value="SmpB"/>
    <property type="match status" value="1"/>
</dbReference>
<dbReference type="Gene3D" id="2.40.280.10">
    <property type="match status" value="1"/>
</dbReference>
<dbReference type="HAMAP" id="MF_00023">
    <property type="entry name" value="SmpB"/>
    <property type="match status" value="1"/>
</dbReference>
<dbReference type="InterPro" id="IPR023620">
    <property type="entry name" value="SmpB"/>
</dbReference>
<dbReference type="InterPro" id="IPR000037">
    <property type="entry name" value="SsrA-bd_prot"/>
</dbReference>
<dbReference type="InterPro" id="IPR020081">
    <property type="entry name" value="SsrA-bd_prot_CS"/>
</dbReference>
<dbReference type="NCBIfam" id="NF003843">
    <property type="entry name" value="PRK05422.1"/>
    <property type="match status" value="1"/>
</dbReference>
<dbReference type="NCBIfam" id="TIGR00086">
    <property type="entry name" value="smpB"/>
    <property type="match status" value="1"/>
</dbReference>
<dbReference type="PANTHER" id="PTHR30308:SF2">
    <property type="entry name" value="SSRA-BINDING PROTEIN"/>
    <property type="match status" value="1"/>
</dbReference>
<dbReference type="PANTHER" id="PTHR30308">
    <property type="entry name" value="TMRNA-BINDING COMPONENT OF TRANS-TRANSLATION TAGGING COMPLEX"/>
    <property type="match status" value="1"/>
</dbReference>
<dbReference type="Pfam" id="PF01668">
    <property type="entry name" value="SmpB"/>
    <property type="match status" value="1"/>
</dbReference>
<dbReference type="SUPFAM" id="SSF74982">
    <property type="entry name" value="Small protein B (SmpB)"/>
    <property type="match status" value="1"/>
</dbReference>
<dbReference type="PROSITE" id="PS01317">
    <property type="entry name" value="SSRP"/>
    <property type="match status" value="1"/>
</dbReference>
<proteinExistence type="inferred from homology"/>
<comment type="function">
    <text evidence="1">Required for rescue of stalled ribosomes mediated by trans-translation. Binds to transfer-messenger RNA (tmRNA), required for stable association of tmRNA with ribosomes. tmRNA and SmpB together mimic tRNA shape, replacing the anticodon stem-loop with SmpB. tmRNA is encoded by the ssrA gene; the 2 termini fold to resemble tRNA(Ala) and it encodes a 'tag peptide', a short internal open reading frame. During trans-translation Ala-aminoacylated tmRNA acts like a tRNA, entering the A-site of stalled ribosomes, displacing the stalled mRNA. The ribosome then switches to translate the ORF on the tmRNA; the nascent peptide is terminated with the 'tag peptide' encoded by the tmRNA and targeted for degradation. The ribosome is freed to recommence translation, which seems to be the essential function of trans-translation.</text>
</comment>
<comment type="subcellular location">
    <subcellularLocation>
        <location evidence="1">Cytoplasm</location>
    </subcellularLocation>
    <text evidence="1">The tmRNA-SmpB complex associates with stalled 70S ribosomes.</text>
</comment>
<comment type="similarity">
    <text evidence="1">Belongs to the SmpB family.</text>
</comment>
<feature type="chain" id="PRO_0000102916" description="SsrA-binding protein">
    <location>
        <begin position="1"/>
        <end position="155"/>
    </location>
</feature>
<accession>Q7VYA8</accession>
<name>SSRP_BORPE</name>
<evidence type="ECO:0000255" key="1">
    <source>
        <dbReference type="HAMAP-Rule" id="MF_00023"/>
    </source>
</evidence>
<gene>
    <name evidence="1" type="primary">smpB</name>
    <name type="ordered locus">BP1442</name>
</gene>
<sequence length="155" mass="18245">MSIIDNRKATHDYFIEDRYEAGMVLEGWEVKAIRDGRVQLKESYVIVRDGEIYLLGMHVSPLPTASTHIRPDATRTRKLLLKAEEIRKLIGKVEQRGYTLVPLNLHYKNGRIKLDFALGRGKKLYDKRDTAREKDWQREKERVLKHDTRVNQRDS</sequence>
<keyword id="KW-0963">Cytoplasm</keyword>
<keyword id="KW-1185">Reference proteome</keyword>
<keyword id="KW-0694">RNA-binding</keyword>
<reference key="1">
    <citation type="journal article" date="2003" name="Nat. Genet.">
        <title>Comparative analysis of the genome sequences of Bordetella pertussis, Bordetella parapertussis and Bordetella bronchiseptica.</title>
        <authorList>
            <person name="Parkhill J."/>
            <person name="Sebaihia M."/>
            <person name="Preston A."/>
            <person name="Murphy L.D."/>
            <person name="Thomson N.R."/>
            <person name="Harris D.E."/>
            <person name="Holden M.T.G."/>
            <person name="Churcher C.M."/>
            <person name="Bentley S.D."/>
            <person name="Mungall K.L."/>
            <person name="Cerdeno-Tarraga A.-M."/>
            <person name="Temple L."/>
            <person name="James K.D."/>
            <person name="Harris B."/>
            <person name="Quail M.A."/>
            <person name="Achtman M."/>
            <person name="Atkin R."/>
            <person name="Baker S."/>
            <person name="Basham D."/>
            <person name="Bason N."/>
            <person name="Cherevach I."/>
            <person name="Chillingworth T."/>
            <person name="Collins M."/>
            <person name="Cronin A."/>
            <person name="Davis P."/>
            <person name="Doggett J."/>
            <person name="Feltwell T."/>
            <person name="Goble A."/>
            <person name="Hamlin N."/>
            <person name="Hauser H."/>
            <person name="Holroyd S."/>
            <person name="Jagels K."/>
            <person name="Leather S."/>
            <person name="Moule S."/>
            <person name="Norberczak H."/>
            <person name="O'Neil S."/>
            <person name="Ormond D."/>
            <person name="Price C."/>
            <person name="Rabbinowitsch E."/>
            <person name="Rutter S."/>
            <person name="Sanders M."/>
            <person name="Saunders D."/>
            <person name="Seeger K."/>
            <person name="Sharp S."/>
            <person name="Simmonds M."/>
            <person name="Skelton J."/>
            <person name="Squares R."/>
            <person name="Squares S."/>
            <person name="Stevens K."/>
            <person name="Unwin L."/>
            <person name="Whitehead S."/>
            <person name="Barrell B.G."/>
            <person name="Maskell D.J."/>
        </authorList>
    </citation>
    <scope>NUCLEOTIDE SEQUENCE [LARGE SCALE GENOMIC DNA]</scope>
    <source>
        <strain>Tohama I / ATCC BAA-589 / NCTC 13251</strain>
    </source>
</reference>